<dbReference type="EC" id="7.1.1.9"/>
<dbReference type="EMBL" id="AF030458">
    <property type="protein sequence ID" value="AAB93597.1"/>
    <property type="molecule type" value="Genomic_DNA"/>
</dbReference>
<dbReference type="SMR" id="O47693"/>
<dbReference type="CTD" id="4514"/>
<dbReference type="GO" id="GO:0005743">
    <property type="term" value="C:mitochondrial inner membrane"/>
    <property type="evidence" value="ECO:0007669"/>
    <property type="project" value="UniProtKB-SubCell"/>
</dbReference>
<dbReference type="GO" id="GO:0045277">
    <property type="term" value="C:respiratory chain complex IV"/>
    <property type="evidence" value="ECO:0000250"/>
    <property type="project" value="UniProtKB"/>
</dbReference>
<dbReference type="GO" id="GO:0004129">
    <property type="term" value="F:cytochrome-c oxidase activity"/>
    <property type="evidence" value="ECO:0007669"/>
    <property type="project" value="UniProtKB-EC"/>
</dbReference>
<dbReference type="GO" id="GO:0006123">
    <property type="term" value="P:mitochondrial electron transport, cytochrome c to oxygen"/>
    <property type="evidence" value="ECO:0007669"/>
    <property type="project" value="TreeGrafter"/>
</dbReference>
<dbReference type="GO" id="GO:0008535">
    <property type="term" value="P:respiratory chain complex IV assembly"/>
    <property type="evidence" value="ECO:0000250"/>
    <property type="project" value="UniProtKB"/>
</dbReference>
<dbReference type="CDD" id="cd01665">
    <property type="entry name" value="Cyt_c_Oxidase_III"/>
    <property type="match status" value="1"/>
</dbReference>
<dbReference type="FunFam" id="1.10.287.70:FF:000048">
    <property type="entry name" value="Cytochrome c oxidase subunit 3"/>
    <property type="match status" value="1"/>
</dbReference>
<dbReference type="FunFam" id="1.20.120.80:FF:000002">
    <property type="entry name" value="Cytochrome c oxidase subunit 3"/>
    <property type="match status" value="1"/>
</dbReference>
<dbReference type="Gene3D" id="1.10.287.70">
    <property type="match status" value="1"/>
</dbReference>
<dbReference type="Gene3D" id="1.20.120.80">
    <property type="entry name" value="Cytochrome c oxidase, subunit III, four-helix bundle"/>
    <property type="match status" value="1"/>
</dbReference>
<dbReference type="InterPro" id="IPR024791">
    <property type="entry name" value="Cyt_c/ubiquinol_Oxase_su3"/>
</dbReference>
<dbReference type="InterPro" id="IPR033945">
    <property type="entry name" value="Cyt_c_oxase_su3_dom"/>
</dbReference>
<dbReference type="InterPro" id="IPR000298">
    <property type="entry name" value="Cyt_c_oxidase-like_su3"/>
</dbReference>
<dbReference type="InterPro" id="IPR035973">
    <property type="entry name" value="Cyt_c_oxidase_su3-like_sf"/>
</dbReference>
<dbReference type="InterPro" id="IPR013833">
    <property type="entry name" value="Cyt_c_oxidase_su3_a-hlx"/>
</dbReference>
<dbReference type="PANTHER" id="PTHR11403:SF7">
    <property type="entry name" value="CYTOCHROME C OXIDASE SUBUNIT 3"/>
    <property type="match status" value="1"/>
</dbReference>
<dbReference type="PANTHER" id="PTHR11403">
    <property type="entry name" value="CYTOCHROME C OXIDASE SUBUNIT III"/>
    <property type="match status" value="1"/>
</dbReference>
<dbReference type="Pfam" id="PF00510">
    <property type="entry name" value="COX3"/>
    <property type="match status" value="1"/>
</dbReference>
<dbReference type="SUPFAM" id="SSF81452">
    <property type="entry name" value="Cytochrome c oxidase subunit III-like"/>
    <property type="match status" value="1"/>
</dbReference>
<dbReference type="PROSITE" id="PS50253">
    <property type="entry name" value="COX3"/>
    <property type="match status" value="1"/>
</dbReference>
<sequence>MTHQTHAYHMVNPSPWPLTGALSALLMTSGLIMWFHFNSTALLMLGLTTNMLTMYQWWRDIVRESTFQGHHTPTVQKGLRYGMILFIISEVLFFTGFFWAFYHSSLAPTPELGGCWPPTGIHPLNPLEVPLLNTSVLLASGVSITWAHHSLMEGNRNHMLQALFITIALGVYFTLLQASEYYEAPFTISDGVYGSTFFVATGFHGLHVIIGSTFLIVCFFRQLKFHFTSNHHFGFEAAAWYWHFVDVVWLFLYVSIYWWGS</sequence>
<comment type="function">
    <text evidence="2">Component of the cytochrome c oxidase, the last enzyme in the mitochondrial electron transport chain which drives oxidative phosphorylation. The respiratory chain contains 3 multisubunit complexes succinate dehydrogenase (complex II, CII), ubiquinol-cytochrome c oxidoreductase (cytochrome b-c1 complex, complex III, CIII) and cytochrome c oxidase (complex IV, CIV), that cooperate to transfer electrons derived from NADH and succinate to molecular oxygen, creating an electrochemical gradient over the inner membrane that drives transmembrane transport and the ATP synthase. Cytochrome c oxidase is the component of the respiratory chain that catalyzes the reduction of oxygen to water. Electrons originating from reduced cytochrome c in the intermembrane space (IMS) are transferred via the dinuclear copper A center (CU(A)) of subunit 2 and heme A of subunit 1 to the active site in subunit 1, a binuclear center (BNC) formed by heme A3 and copper B (CU(B)). The BNC reduces molecular oxygen to 2 water molecules using 4 electrons from cytochrome c in the IMS and 4 protons from the mitochondrial matrix.</text>
</comment>
<comment type="catalytic activity">
    <reaction evidence="2">
        <text>4 Fe(II)-[cytochrome c] + O2 + 8 H(+)(in) = 4 Fe(III)-[cytochrome c] + 2 H2O + 4 H(+)(out)</text>
        <dbReference type="Rhea" id="RHEA:11436"/>
        <dbReference type="Rhea" id="RHEA-COMP:10350"/>
        <dbReference type="Rhea" id="RHEA-COMP:14399"/>
        <dbReference type="ChEBI" id="CHEBI:15377"/>
        <dbReference type="ChEBI" id="CHEBI:15378"/>
        <dbReference type="ChEBI" id="CHEBI:15379"/>
        <dbReference type="ChEBI" id="CHEBI:29033"/>
        <dbReference type="ChEBI" id="CHEBI:29034"/>
        <dbReference type="EC" id="7.1.1.9"/>
    </reaction>
    <physiologicalReaction direction="left-to-right" evidence="2">
        <dbReference type="Rhea" id="RHEA:11437"/>
    </physiologicalReaction>
</comment>
<comment type="subunit">
    <text evidence="1">Component of the cytochrome c oxidase (complex IV, CIV), a multisubunit enzyme composed of 14 subunits. The complex is composed of a catalytic core of 3 subunits MT-CO1, MT-CO2 and MT-CO3, encoded in the mitochondrial DNA, and 11 supernumerary subunits COX4I, COX5A, COX5B, COX6A, COX6B, COX6C, COX7A, COX7B, COX7C, COX8 and NDUFA4, which are encoded in the nuclear genome. The complex exists as a monomer or a dimer and forms supercomplexes (SCs) in the inner mitochondrial membrane with NADH-ubiquinone oxidoreductase (complex I, CI) and ubiquinol-cytochrome c oxidoreductase (cytochrome b-c1 complex, complex III, CIII), resulting in different assemblies (supercomplex SCI(1)III(2)IV(1) and megacomplex MCI(2)III(2)IV(2)).</text>
</comment>
<comment type="subcellular location">
    <subcellularLocation>
        <location evidence="1">Mitochondrion inner membrane</location>
        <topology evidence="1">Multi-pass membrane protein</topology>
    </subcellularLocation>
</comment>
<comment type="similarity">
    <text evidence="3">Belongs to the cytochrome c oxidase subunit 3 family.</text>
</comment>
<name>COX3_CEPNA</name>
<gene>
    <name type="primary">MT-CO3</name>
    <name type="synonym">COIII</name>
    <name type="synonym">COXIII</name>
    <name type="synonym">MTCO3</name>
</gene>
<protein>
    <recommendedName>
        <fullName>Cytochrome c oxidase subunit 3</fullName>
        <ecNumber>7.1.1.9</ecNumber>
    </recommendedName>
    <alternativeName>
        <fullName>Cytochrome c oxidase polypeptide III</fullName>
    </alternativeName>
</protein>
<evidence type="ECO:0000250" key="1">
    <source>
        <dbReference type="UniProtKB" id="P00415"/>
    </source>
</evidence>
<evidence type="ECO:0000250" key="2">
    <source>
        <dbReference type="UniProtKB" id="P00420"/>
    </source>
</evidence>
<evidence type="ECO:0000305" key="3"/>
<reference key="1">
    <citation type="journal article" date="1999" name="Mol. Phylogenet. Evol.">
        <title>Phylogenetic relationships in the bovid subfamily Antilopinae based on mitochondrial DNA sequences.</title>
        <authorList>
            <person name="Rebholz W.E.R."/>
            <person name="Harley E.H."/>
        </authorList>
    </citation>
    <scope>NUCLEOTIDE SEQUENCE [GENOMIC DNA]</scope>
</reference>
<accession>O47693</accession>
<proteinExistence type="inferred from homology"/>
<feature type="chain" id="PRO_0000183755" description="Cytochrome c oxidase subunit 3">
    <location>
        <begin position="1"/>
        <end position="261"/>
    </location>
</feature>
<feature type="topological domain" description="Mitochondrial matrix" evidence="1">
    <location>
        <begin position="1"/>
        <end position="15"/>
    </location>
</feature>
<feature type="transmembrane region" description="Helical; Name=I" evidence="1">
    <location>
        <begin position="16"/>
        <end position="34"/>
    </location>
</feature>
<feature type="topological domain" description="Mitochondrial intermembrane" evidence="1">
    <location>
        <begin position="35"/>
        <end position="40"/>
    </location>
</feature>
<feature type="transmembrane region" description="Helical; Name=II" evidence="1">
    <location>
        <begin position="41"/>
        <end position="66"/>
    </location>
</feature>
<feature type="topological domain" description="Mitochondrial matrix" evidence="1">
    <location>
        <begin position="67"/>
        <end position="72"/>
    </location>
</feature>
<feature type="transmembrane region" description="Helical; Name=III" evidence="1">
    <location>
        <begin position="73"/>
        <end position="105"/>
    </location>
</feature>
<feature type="topological domain" description="Mitochondrial intermembrane" evidence="1">
    <location>
        <begin position="106"/>
        <end position="128"/>
    </location>
</feature>
<feature type="transmembrane region" description="Helical; Name=IV" evidence="1">
    <location>
        <begin position="129"/>
        <end position="152"/>
    </location>
</feature>
<feature type="topological domain" description="Mitochondrial matrix" evidence="1">
    <location>
        <begin position="153"/>
        <end position="155"/>
    </location>
</feature>
<feature type="transmembrane region" description="Helical; Name=V" evidence="1">
    <location>
        <begin position="156"/>
        <end position="183"/>
    </location>
</feature>
<feature type="topological domain" description="Mitochondrial intermembrane" evidence="1">
    <location>
        <begin position="184"/>
        <end position="190"/>
    </location>
</feature>
<feature type="transmembrane region" description="Helical; Name=VI" evidence="1">
    <location>
        <begin position="191"/>
        <end position="223"/>
    </location>
</feature>
<feature type="topological domain" description="Mitochondrial matrix" evidence="1">
    <location>
        <begin position="224"/>
        <end position="232"/>
    </location>
</feature>
<feature type="transmembrane region" description="Helical; Name=VII" evidence="1">
    <location>
        <begin position="233"/>
        <end position="256"/>
    </location>
</feature>
<feature type="topological domain" description="Mitochondrial intermembrane" evidence="1">
    <location>
        <begin position="257"/>
        <end position="261"/>
    </location>
</feature>
<keyword id="KW-0472">Membrane</keyword>
<keyword id="KW-0496">Mitochondrion</keyword>
<keyword id="KW-0999">Mitochondrion inner membrane</keyword>
<keyword id="KW-1278">Translocase</keyword>
<keyword id="KW-0812">Transmembrane</keyword>
<keyword id="KW-1133">Transmembrane helix</keyword>
<geneLocation type="mitochondrion"/>
<organism>
    <name type="scientific">Cephalophorus natalensis</name>
    <name type="common">Natal red duiker</name>
    <name type="synonym">Cephalophus natalensis</name>
    <dbReference type="NCBI Taxonomy" id="69299"/>
    <lineage>
        <taxon>Eukaryota</taxon>
        <taxon>Metazoa</taxon>
        <taxon>Chordata</taxon>
        <taxon>Craniata</taxon>
        <taxon>Vertebrata</taxon>
        <taxon>Euteleostomi</taxon>
        <taxon>Mammalia</taxon>
        <taxon>Eutheria</taxon>
        <taxon>Laurasiatheria</taxon>
        <taxon>Artiodactyla</taxon>
        <taxon>Ruminantia</taxon>
        <taxon>Pecora</taxon>
        <taxon>Bovidae</taxon>
        <taxon>Cephalophinae</taxon>
        <taxon>Cephalophorus</taxon>
    </lineage>
</organism>